<accession>Q54M86</accession>
<protein>
    <recommendedName>
        <fullName>Reactive oxygen species modulator 1 homolog</fullName>
        <shortName>ROS modulator 1 homolog</shortName>
    </recommendedName>
    <alternativeName>
        <fullName>Protein MGR2 homolog</fullName>
    </alternativeName>
</protein>
<reference key="1">
    <citation type="journal article" date="2005" name="Nature">
        <title>The genome of the social amoeba Dictyostelium discoideum.</title>
        <authorList>
            <person name="Eichinger L."/>
            <person name="Pachebat J.A."/>
            <person name="Gloeckner G."/>
            <person name="Rajandream M.A."/>
            <person name="Sucgang R."/>
            <person name="Berriman M."/>
            <person name="Song J."/>
            <person name="Olsen R."/>
            <person name="Szafranski K."/>
            <person name="Xu Q."/>
            <person name="Tunggal B."/>
            <person name="Kummerfeld S."/>
            <person name="Madera M."/>
            <person name="Konfortov B.A."/>
            <person name="Rivero F."/>
            <person name="Bankier A.T."/>
            <person name="Lehmann R."/>
            <person name="Hamlin N."/>
            <person name="Davies R."/>
            <person name="Gaudet P."/>
            <person name="Fey P."/>
            <person name="Pilcher K."/>
            <person name="Chen G."/>
            <person name="Saunders D."/>
            <person name="Sodergren E.J."/>
            <person name="Davis P."/>
            <person name="Kerhornou A."/>
            <person name="Nie X."/>
            <person name="Hall N."/>
            <person name="Anjard C."/>
            <person name="Hemphill L."/>
            <person name="Bason N."/>
            <person name="Farbrother P."/>
            <person name="Desany B."/>
            <person name="Just E."/>
            <person name="Morio T."/>
            <person name="Rost R."/>
            <person name="Churcher C.M."/>
            <person name="Cooper J."/>
            <person name="Haydock S."/>
            <person name="van Driessche N."/>
            <person name="Cronin A."/>
            <person name="Goodhead I."/>
            <person name="Muzny D.M."/>
            <person name="Mourier T."/>
            <person name="Pain A."/>
            <person name="Lu M."/>
            <person name="Harper D."/>
            <person name="Lindsay R."/>
            <person name="Hauser H."/>
            <person name="James K.D."/>
            <person name="Quiles M."/>
            <person name="Madan Babu M."/>
            <person name="Saito T."/>
            <person name="Buchrieser C."/>
            <person name="Wardroper A."/>
            <person name="Felder M."/>
            <person name="Thangavelu M."/>
            <person name="Johnson D."/>
            <person name="Knights A."/>
            <person name="Loulseged H."/>
            <person name="Mungall K.L."/>
            <person name="Oliver K."/>
            <person name="Price C."/>
            <person name="Quail M.A."/>
            <person name="Urushihara H."/>
            <person name="Hernandez J."/>
            <person name="Rabbinowitsch E."/>
            <person name="Steffen D."/>
            <person name="Sanders M."/>
            <person name="Ma J."/>
            <person name="Kohara Y."/>
            <person name="Sharp S."/>
            <person name="Simmonds M.N."/>
            <person name="Spiegler S."/>
            <person name="Tivey A."/>
            <person name="Sugano S."/>
            <person name="White B."/>
            <person name="Walker D."/>
            <person name="Woodward J.R."/>
            <person name="Winckler T."/>
            <person name="Tanaka Y."/>
            <person name="Shaulsky G."/>
            <person name="Schleicher M."/>
            <person name="Weinstock G.M."/>
            <person name="Rosenthal A."/>
            <person name="Cox E.C."/>
            <person name="Chisholm R.L."/>
            <person name="Gibbs R.A."/>
            <person name="Loomis W.F."/>
            <person name="Platzer M."/>
            <person name="Kay R.R."/>
            <person name="Williams J.G."/>
            <person name="Dear P.H."/>
            <person name="Noegel A.A."/>
            <person name="Barrell B.G."/>
            <person name="Kuspa A."/>
        </authorList>
    </citation>
    <scope>NUCLEOTIDE SEQUENCE [LARGE SCALE GENOMIC DNA]</scope>
    <source>
        <strain>AX4</strain>
    </source>
</reference>
<organism>
    <name type="scientific">Dictyostelium discoideum</name>
    <name type="common">Social amoeba</name>
    <dbReference type="NCBI Taxonomy" id="44689"/>
    <lineage>
        <taxon>Eukaryota</taxon>
        <taxon>Amoebozoa</taxon>
        <taxon>Evosea</taxon>
        <taxon>Eumycetozoa</taxon>
        <taxon>Dictyostelia</taxon>
        <taxon>Dictyosteliales</taxon>
        <taxon>Dictyosteliaceae</taxon>
        <taxon>Dictyostelium</taxon>
    </lineage>
</organism>
<name>ROMO1_DICDI</name>
<feature type="chain" id="PRO_0000343159" description="Reactive oxygen species modulator 1 homolog">
    <location>
        <begin position="1"/>
        <end position="128"/>
    </location>
</feature>
<feature type="transmembrane region" description="Helical" evidence="2">
    <location>
        <begin position="30"/>
        <end position="50"/>
    </location>
</feature>
<proteinExistence type="inferred from homology"/>
<comment type="subcellular location">
    <subcellularLocation>
        <location evidence="1">Mitochondrion membrane</location>
        <topology evidence="1">Single-pass membrane protein</topology>
    </subcellularLocation>
</comment>
<comment type="similarity">
    <text evidence="3">Belongs to the MGR2 family.</text>
</comment>
<keyword id="KW-0472">Membrane</keyword>
<keyword id="KW-0496">Mitochondrion</keyword>
<keyword id="KW-1185">Reference proteome</keyword>
<keyword id="KW-0812">Transmembrane</keyword>
<keyword id="KW-1133">Transmembrane helix</keyword>
<dbReference type="EMBL" id="AAFI02000085">
    <property type="protein sequence ID" value="EAL64383.1"/>
    <property type="molecule type" value="Genomic_DNA"/>
</dbReference>
<dbReference type="RefSeq" id="XP_637862.1">
    <property type="nucleotide sequence ID" value="XM_632770.1"/>
</dbReference>
<dbReference type="SMR" id="Q54M86"/>
<dbReference type="FunCoup" id="Q54M86">
    <property type="interactions" value="67"/>
</dbReference>
<dbReference type="STRING" id="44689.Q54M86"/>
<dbReference type="TCDB" id="1.A.111.1.5">
    <property type="family name" value="the reactive oxygen species modulator 1 (romo1) family"/>
</dbReference>
<dbReference type="PaxDb" id="44689-DDB0304361"/>
<dbReference type="EnsemblProtists" id="EAL64383">
    <property type="protein sequence ID" value="EAL64383"/>
    <property type="gene ID" value="DDB_G0286181"/>
</dbReference>
<dbReference type="GeneID" id="8625459"/>
<dbReference type="KEGG" id="ddi:DDB_G0286181"/>
<dbReference type="dictyBase" id="DDB_G0286181">
    <property type="gene designation" value="romo1"/>
</dbReference>
<dbReference type="VEuPathDB" id="AmoebaDB:DDB_G0286181"/>
<dbReference type="HOGENOM" id="CLU_1963704_0_0_1"/>
<dbReference type="InParanoid" id="Q54M86"/>
<dbReference type="OMA" id="MYSKIAG"/>
<dbReference type="PRO" id="PR:Q54M86"/>
<dbReference type="Proteomes" id="UP000002195">
    <property type="component" value="Chromosome 4"/>
</dbReference>
<dbReference type="GO" id="GO:0005739">
    <property type="term" value="C:mitochondrion"/>
    <property type="evidence" value="ECO:0000250"/>
    <property type="project" value="dictyBase"/>
</dbReference>
<dbReference type="GO" id="GO:0005744">
    <property type="term" value="C:TIM23 mitochondrial import inner membrane translocase complex"/>
    <property type="evidence" value="ECO:0000318"/>
    <property type="project" value="GO_Central"/>
</dbReference>
<dbReference type="GO" id="GO:0030150">
    <property type="term" value="P:protein import into mitochondrial matrix"/>
    <property type="evidence" value="ECO:0000318"/>
    <property type="project" value="GO_Central"/>
</dbReference>
<dbReference type="GO" id="GO:0045039">
    <property type="term" value="P:protein insertion into mitochondrial inner membrane"/>
    <property type="evidence" value="ECO:0000318"/>
    <property type="project" value="GO_Central"/>
</dbReference>
<dbReference type="InterPro" id="IPR018450">
    <property type="entry name" value="Romo1/Mgr2"/>
</dbReference>
<dbReference type="PANTHER" id="PTHR28525">
    <property type="entry name" value="REACTIVE OXYGEN SPECIES MODULATOR 1"/>
    <property type="match status" value="1"/>
</dbReference>
<dbReference type="PANTHER" id="PTHR28525:SF1">
    <property type="entry name" value="REACTIVE OXYGEN SPECIES MODULATOR 1"/>
    <property type="match status" value="1"/>
</dbReference>
<dbReference type="Pfam" id="PF10247">
    <property type="entry name" value="Romo1"/>
    <property type="match status" value="1"/>
</dbReference>
<dbReference type="SMART" id="SM01378">
    <property type="entry name" value="Romo1"/>
    <property type="match status" value="1"/>
</dbReference>
<sequence length="128" mass="14124">MSYPKRYGQENNRVLGDANNQCIQSIKMGFLMGAGVGATFGSCIVLIMFAAKKLPRAILMKTLGSSAMKMGGMFGCFMGIGGALRCEVDETKINKNNKNNNNNNNNIHSFFKNSNTEYDISKFNKTKF</sequence>
<gene>
    <name type="primary">romo1</name>
    <name type="ORF">DDB_G0286181</name>
</gene>
<evidence type="ECO:0000250" key="1"/>
<evidence type="ECO:0000255" key="2"/>
<evidence type="ECO:0000305" key="3"/>